<organism>
    <name type="scientific">Oryza sativa subsp. japonica</name>
    <name type="common">Rice</name>
    <dbReference type="NCBI Taxonomy" id="39947"/>
    <lineage>
        <taxon>Eukaryota</taxon>
        <taxon>Viridiplantae</taxon>
        <taxon>Streptophyta</taxon>
        <taxon>Embryophyta</taxon>
        <taxon>Tracheophyta</taxon>
        <taxon>Spermatophyta</taxon>
        <taxon>Magnoliopsida</taxon>
        <taxon>Liliopsida</taxon>
        <taxon>Poales</taxon>
        <taxon>Poaceae</taxon>
        <taxon>BOP clade</taxon>
        <taxon>Oryzoideae</taxon>
        <taxon>Oryzeae</taxon>
        <taxon>Oryzinae</taxon>
        <taxon>Oryza</taxon>
        <taxon>Oryza sativa</taxon>
    </lineage>
</organism>
<sequence>MYMDLTLGGALLQVEEATEEEEEEEEEEQALGQEPAPAAAAAALVLGRRHGVVVGGGGGGVVVAAEREHMFDKVVTPSDVGKLNRLVVPKQHAERFFPAAAAGTQLCFEDRAGTPWRFRYSYWGSSQSYVMTKGWSRFVRAARLSAGDTVSFSRAADGRYFIDYRHCHRHGGRDISFASAATAMPAAAWPLFGRVQTAAPVSYGGGHGSAAAATMFLDTVAPVAAAGGHRGEVGPSGQRSFRLFGVNVECGGDVDAAAEEEDADDDVDDGDHRRGEEMELVMWTNHR</sequence>
<comment type="subcellular location">
    <subcellularLocation>
        <location evidence="1">Nucleus</location>
    </subcellularLocation>
</comment>
<accession>Q7EZD5</accession>
<accession>A0A0P0XBU2</accession>
<keyword id="KW-0238">DNA-binding</keyword>
<keyword id="KW-0539">Nucleus</keyword>
<keyword id="KW-1185">Reference proteome</keyword>
<keyword id="KW-0804">Transcription</keyword>
<keyword id="KW-0805">Transcription regulation</keyword>
<protein>
    <recommendedName>
        <fullName>Putative B3 domain-containing protein Os08g0157700</fullName>
    </recommendedName>
</protein>
<gene>
    <name type="ordered locus">Os08g0157700</name>
    <name type="ordered locus">LOC_Os08g06120</name>
    <name type="ORF">OsJ_26107</name>
    <name type="ORF">P0498E12.101</name>
</gene>
<feature type="chain" id="PRO_0000376983" description="Putative B3 domain-containing protein Os08g0157700">
    <location>
        <begin position="1"/>
        <end position="287"/>
    </location>
</feature>
<feature type="DNA-binding region" description="TF-B3" evidence="1">
    <location>
        <begin position="71"/>
        <end position="168"/>
    </location>
</feature>
<feature type="region of interest" description="Disordered" evidence="2">
    <location>
        <begin position="17"/>
        <end position="36"/>
    </location>
</feature>
<feature type="compositionally biased region" description="Acidic residues" evidence="2">
    <location>
        <begin position="17"/>
        <end position="29"/>
    </location>
</feature>
<dbReference type="EMBL" id="AP004698">
    <property type="protein sequence ID" value="BAC99651.1"/>
    <property type="molecule type" value="Genomic_DNA"/>
</dbReference>
<dbReference type="EMBL" id="AP014964">
    <property type="protein sequence ID" value="BAT03908.1"/>
    <property type="molecule type" value="Genomic_DNA"/>
</dbReference>
<dbReference type="EMBL" id="CM000145">
    <property type="protein sequence ID" value="EAZ41573.1"/>
    <property type="molecule type" value="Genomic_DNA"/>
</dbReference>
<dbReference type="SMR" id="Q7EZD5"/>
<dbReference type="FunCoup" id="Q7EZD5">
    <property type="interactions" value="24"/>
</dbReference>
<dbReference type="PaxDb" id="39947-Q7EZD5"/>
<dbReference type="EnsemblPlants" id="Os08t0157700-00">
    <property type="protein sequence ID" value="Os08t0157700-00"/>
    <property type="gene ID" value="Os08g0157700"/>
</dbReference>
<dbReference type="GeneID" id="107277666"/>
<dbReference type="Gramene" id="Os08t0157700-00">
    <property type="protein sequence ID" value="Os08t0157700-00"/>
    <property type="gene ID" value="Os08g0157700"/>
</dbReference>
<dbReference type="KEGG" id="osa:107277666"/>
<dbReference type="eggNOG" id="ENOG502R1HF">
    <property type="taxonomic scope" value="Eukaryota"/>
</dbReference>
<dbReference type="HOGENOM" id="CLU_038898_4_1_1"/>
<dbReference type="InParanoid" id="Q7EZD5"/>
<dbReference type="OMA" id="IDYRHCQ"/>
<dbReference type="OrthoDB" id="2020802at2759"/>
<dbReference type="Proteomes" id="UP000000763">
    <property type="component" value="Chromosome 8"/>
</dbReference>
<dbReference type="Proteomes" id="UP000007752">
    <property type="component" value="Chromosome 8"/>
</dbReference>
<dbReference type="Proteomes" id="UP000059680">
    <property type="component" value="Chromosome 8"/>
</dbReference>
<dbReference type="GO" id="GO:0005634">
    <property type="term" value="C:nucleus"/>
    <property type="evidence" value="ECO:0007669"/>
    <property type="project" value="UniProtKB-SubCell"/>
</dbReference>
<dbReference type="GO" id="GO:0003677">
    <property type="term" value="F:DNA binding"/>
    <property type="evidence" value="ECO:0007669"/>
    <property type="project" value="UniProtKB-KW"/>
</dbReference>
<dbReference type="GO" id="GO:0003700">
    <property type="term" value="F:DNA-binding transcription factor activity"/>
    <property type="evidence" value="ECO:0007669"/>
    <property type="project" value="InterPro"/>
</dbReference>
<dbReference type="CDD" id="cd10017">
    <property type="entry name" value="B3_DNA"/>
    <property type="match status" value="1"/>
</dbReference>
<dbReference type="Gene3D" id="2.40.330.10">
    <property type="entry name" value="DNA-binding pseudobarrel domain"/>
    <property type="match status" value="1"/>
</dbReference>
<dbReference type="InterPro" id="IPR003340">
    <property type="entry name" value="B3_DNA-bd"/>
</dbReference>
<dbReference type="InterPro" id="IPR015300">
    <property type="entry name" value="DNA-bd_pseudobarrel_sf"/>
</dbReference>
<dbReference type="InterPro" id="IPR044800">
    <property type="entry name" value="LEC2-like"/>
</dbReference>
<dbReference type="PANTHER" id="PTHR31140:SF14">
    <property type="entry name" value="B3 DOMAIN-CONTAINING PROTEIN OS08G0157700-RELATED"/>
    <property type="match status" value="1"/>
</dbReference>
<dbReference type="PANTHER" id="PTHR31140">
    <property type="entry name" value="B3 DOMAIN-CONTAINING TRANSCRIPTION FACTOR ABI3"/>
    <property type="match status" value="1"/>
</dbReference>
<dbReference type="Pfam" id="PF02362">
    <property type="entry name" value="B3"/>
    <property type="match status" value="1"/>
</dbReference>
<dbReference type="SMART" id="SM01019">
    <property type="entry name" value="B3"/>
    <property type="match status" value="1"/>
</dbReference>
<dbReference type="SUPFAM" id="SSF101936">
    <property type="entry name" value="DNA-binding pseudobarrel domain"/>
    <property type="match status" value="1"/>
</dbReference>
<dbReference type="PROSITE" id="PS50863">
    <property type="entry name" value="B3"/>
    <property type="match status" value="1"/>
</dbReference>
<name>Y8577_ORYSJ</name>
<proteinExistence type="inferred from homology"/>
<evidence type="ECO:0000255" key="1">
    <source>
        <dbReference type="PROSITE-ProRule" id="PRU00326"/>
    </source>
</evidence>
<evidence type="ECO:0000256" key="2">
    <source>
        <dbReference type="SAM" id="MobiDB-lite"/>
    </source>
</evidence>
<reference key="1">
    <citation type="journal article" date="2005" name="Nature">
        <title>The map-based sequence of the rice genome.</title>
        <authorList>
            <consortium name="International rice genome sequencing project (IRGSP)"/>
        </authorList>
    </citation>
    <scope>NUCLEOTIDE SEQUENCE [LARGE SCALE GENOMIC DNA]</scope>
    <source>
        <strain>cv. Nipponbare</strain>
    </source>
</reference>
<reference key="2">
    <citation type="journal article" date="2013" name="Rice">
        <title>Improvement of the Oryza sativa Nipponbare reference genome using next generation sequence and optical map data.</title>
        <authorList>
            <person name="Kawahara Y."/>
            <person name="de la Bastide M."/>
            <person name="Hamilton J.P."/>
            <person name="Kanamori H."/>
            <person name="McCombie W.R."/>
            <person name="Ouyang S."/>
            <person name="Schwartz D.C."/>
            <person name="Tanaka T."/>
            <person name="Wu J."/>
            <person name="Zhou S."/>
            <person name="Childs K.L."/>
            <person name="Davidson R.M."/>
            <person name="Lin H."/>
            <person name="Quesada-Ocampo L."/>
            <person name="Vaillancourt B."/>
            <person name="Sakai H."/>
            <person name="Lee S.S."/>
            <person name="Kim J."/>
            <person name="Numa H."/>
            <person name="Itoh T."/>
            <person name="Buell C.R."/>
            <person name="Matsumoto T."/>
        </authorList>
    </citation>
    <scope>GENOME REANNOTATION</scope>
    <source>
        <strain>cv. Nipponbare</strain>
    </source>
</reference>
<reference key="3">
    <citation type="journal article" date="2005" name="PLoS Biol.">
        <title>The genomes of Oryza sativa: a history of duplications.</title>
        <authorList>
            <person name="Yu J."/>
            <person name="Wang J."/>
            <person name="Lin W."/>
            <person name="Li S."/>
            <person name="Li H."/>
            <person name="Zhou J."/>
            <person name="Ni P."/>
            <person name="Dong W."/>
            <person name="Hu S."/>
            <person name="Zeng C."/>
            <person name="Zhang J."/>
            <person name="Zhang Y."/>
            <person name="Li R."/>
            <person name="Xu Z."/>
            <person name="Li S."/>
            <person name="Li X."/>
            <person name="Zheng H."/>
            <person name="Cong L."/>
            <person name="Lin L."/>
            <person name="Yin J."/>
            <person name="Geng J."/>
            <person name="Li G."/>
            <person name="Shi J."/>
            <person name="Liu J."/>
            <person name="Lv H."/>
            <person name="Li J."/>
            <person name="Wang J."/>
            <person name="Deng Y."/>
            <person name="Ran L."/>
            <person name="Shi X."/>
            <person name="Wang X."/>
            <person name="Wu Q."/>
            <person name="Li C."/>
            <person name="Ren X."/>
            <person name="Wang J."/>
            <person name="Wang X."/>
            <person name="Li D."/>
            <person name="Liu D."/>
            <person name="Zhang X."/>
            <person name="Ji Z."/>
            <person name="Zhao W."/>
            <person name="Sun Y."/>
            <person name="Zhang Z."/>
            <person name="Bao J."/>
            <person name="Han Y."/>
            <person name="Dong L."/>
            <person name="Ji J."/>
            <person name="Chen P."/>
            <person name="Wu S."/>
            <person name="Liu J."/>
            <person name="Xiao Y."/>
            <person name="Bu D."/>
            <person name="Tan J."/>
            <person name="Yang L."/>
            <person name="Ye C."/>
            <person name="Zhang J."/>
            <person name="Xu J."/>
            <person name="Zhou Y."/>
            <person name="Yu Y."/>
            <person name="Zhang B."/>
            <person name="Zhuang S."/>
            <person name="Wei H."/>
            <person name="Liu B."/>
            <person name="Lei M."/>
            <person name="Yu H."/>
            <person name="Li Y."/>
            <person name="Xu H."/>
            <person name="Wei S."/>
            <person name="He X."/>
            <person name="Fang L."/>
            <person name="Zhang Z."/>
            <person name="Zhang Y."/>
            <person name="Huang X."/>
            <person name="Su Z."/>
            <person name="Tong W."/>
            <person name="Li J."/>
            <person name="Tong Z."/>
            <person name="Li S."/>
            <person name="Ye J."/>
            <person name="Wang L."/>
            <person name="Fang L."/>
            <person name="Lei T."/>
            <person name="Chen C.-S."/>
            <person name="Chen H.-C."/>
            <person name="Xu Z."/>
            <person name="Li H."/>
            <person name="Huang H."/>
            <person name="Zhang F."/>
            <person name="Xu H."/>
            <person name="Li N."/>
            <person name="Zhao C."/>
            <person name="Li S."/>
            <person name="Dong L."/>
            <person name="Huang Y."/>
            <person name="Li L."/>
            <person name="Xi Y."/>
            <person name="Qi Q."/>
            <person name="Li W."/>
            <person name="Zhang B."/>
            <person name="Hu W."/>
            <person name="Zhang Y."/>
            <person name="Tian X."/>
            <person name="Jiao Y."/>
            <person name="Liang X."/>
            <person name="Jin J."/>
            <person name="Gao L."/>
            <person name="Zheng W."/>
            <person name="Hao B."/>
            <person name="Liu S.-M."/>
            <person name="Wang W."/>
            <person name="Yuan L."/>
            <person name="Cao M."/>
            <person name="McDermott J."/>
            <person name="Samudrala R."/>
            <person name="Wang J."/>
            <person name="Wong G.K.-S."/>
            <person name="Yang H."/>
        </authorList>
    </citation>
    <scope>NUCLEOTIDE SEQUENCE [LARGE SCALE GENOMIC DNA]</scope>
    <source>
        <strain>cv. Nipponbare</strain>
    </source>
</reference>